<accession>P02805</accession>
<protein>
    <recommendedName>
        <fullName>Metallothionein-1</fullName>
        <shortName>MT-1</shortName>
    </recommendedName>
    <alternativeName>
        <fullName>Metallothionein-I</fullName>
        <shortName>MT-I</shortName>
    </alternativeName>
</protein>
<dbReference type="PIR" id="A03283">
    <property type="entry name" value="SMKD1S"/>
</dbReference>
<dbReference type="SMR" id="P02805"/>
<dbReference type="GO" id="GO:0046872">
    <property type="term" value="F:metal ion binding"/>
    <property type="evidence" value="ECO:0007669"/>
    <property type="project" value="UniProtKB-KW"/>
</dbReference>
<dbReference type="InterPro" id="IPR002045">
    <property type="entry name" value="Metalthion_crustacean"/>
</dbReference>
<dbReference type="InterPro" id="IPR017854">
    <property type="entry name" value="Metalthion_dom_sf"/>
</dbReference>
<dbReference type="PRINTS" id="PR00858">
    <property type="entry name" value="MTCRUSTACEAN"/>
</dbReference>
<dbReference type="SUPFAM" id="SSF57868">
    <property type="entry name" value="Metallothionein"/>
    <property type="match status" value="2"/>
</dbReference>
<sequence length="58" mass="6001">PGPCCNDKCVCKEGGCKEGCQCTSCRCSPCEKCSSGCKCANKEECSKTCSKACSCCPT</sequence>
<organism>
    <name type="scientific">Scylla serrata</name>
    <name type="common">Mud crab</name>
    <dbReference type="NCBI Taxonomy" id="6761"/>
    <lineage>
        <taxon>Eukaryota</taxon>
        <taxon>Metazoa</taxon>
        <taxon>Ecdysozoa</taxon>
        <taxon>Arthropoda</taxon>
        <taxon>Crustacea</taxon>
        <taxon>Multicrustacea</taxon>
        <taxon>Malacostraca</taxon>
        <taxon>Eumalacostraca</taxon>
        <taxon>Eucarida</taxon>
        <taxon>Decapoda</taxon>
        <taxon>Pleocyemata</taxon>
        <taxon>Brachyura</taxon>
        <taxon>Eubrachyura</taxon>
        <taxon>Portunoidea</taxon>
        <taxon>Portunidae</taxon>
        <taxon>Portuninae</taxon>
        <taxon>Scylla</taxon>
    </lineage>
</organism>
<keyword id="KW-0903">Direct protein sequencing</keyword>
<keyword id="KW-0479">Metal-binding</keyword>
<keyword id="KW-0480">Metal-thiolate cluster</keyword>
<name>MT1_SCYSE</name>
<proteinExistence type="evidence at protein level"/>
<feature type="chain" id="PRO_0000197340" description="Metallothionein-1">
    <location>
        <begin position="1"/>
        <end position="58"/>
    </location>
</feature>
<feature type="region of interest" description="Beta">
    <location>
        <begin position="1"/>
        <end position="28"/>
    </location>
</feature>
<feature type="region of interest" description="Alpha">
    <location>
        <begin position="29"/>
        <end position="58"/>
    </location>
</feature>
<feature type="binding site" evidence="1">
    <location>
        <position position="4"/>
    </location>
    <ligand>
        <name>a divalent metal cation</name>
        <dbReference type="ChEBI" id="CHEBI:60240"/>
        <label>1</label>
        <note>in cluster B</note>
    </ligand>
</feature>
<feature type="binding site" evidence="1">
    <location>
        <position position="5"/>
    </location>
    <ligand>
        <name>a divalent metal cation</name>
        <dbReference type="ChEBI" id="CHEBI:60240"/>
        <label>1</label>
        <note>in cluster B</note>
    </ligand>
</feature>
<feature type="binding site" evidence="1">
    <location>
        <position position="5"/>
    </location>
    <ligand>
        <name>a divalent metal cation</name>
        <dbReference type="ChEBI" id="CHEBI:60240"/>
        <label>2</label>
        <note>in cluster B</note>
    </ligand>
</feature>
<feature type="binding site" evidence="1">
    <location>
        <position position="9"/>
    </location>
    <ligand>
        <name>a divalent metal cation</name>
        <dbReference type="ChEBI" id="CHEBI:60240"/>
        <label>2</label>
        <note>in cluster B</note>
    </ligand>
</feature>
<feature type="binding site" evidence="1">
    <location>
        <position position="11"/>
    </location>
    <ligand>
        <name>a divalent metal cation</name>
        <dbReference type="ChEBI" id="CHEBI:60240"/>
        <label>3</label>
        <note>in cluster B</note>
    </ligand>
</feature>
<feature type="binding site" evidence="1">
    <location>
        <position position="16"/>
    </location>
    <ligand>
        <name>a divalent metal cation</name>
        <dbReference type="ChEBI" id="CHEBI:60240"/>
        <label>1</label>
        <note>in cluster B</note>
    </ligand>
</feature>
<feature type="binding site" evidence="1">
    <location>
        <position position="16"/>
    </location>
    <ligand>
        <name>a divalent metal cation</name>
        <dbReference type="ChEBI" id="CHEBI:60240"/>
        <label>3</label>
        <note>in cluster B</note>
    </ligand>
</feature>
<feature type="binding site" evidence="1">
    <location>
        <position position="20"/>
    </location>
    <ligand>
        <name>a divalent metal cation</name>
        <dbReference type="ChEBI" id="CHEBI:60240"/>
        <label>1</label>
        <note>in cluster B</note>
    </ligand>
</feature>
<feature type="binding site" evidence="1">
    <location>
        <position position="22"/>
    </location>
    <ligand>
        <name>a divalent metal cation</name>
        <dbReference type="ChEBI" id="CHEBI:60240"/>
        <label>2</label>
        <note>in cluster B</note>
    </ligand>
</feature>
<feature type="binding site" evidence="1">
    <location>
        <position position="25"/>
    </location>
    <ligand>
        <name>a divalent metal cation</name>
        <dbReference type="ChEBI" id="CHEBI:60240"/>
        <label>2</label>
        <note>in cluster B</note>
    </ligand>
</feature>
<feature type="binding site" evidence="1">
    <location>
        <position position="25"/>
    </location>
    <ligand>
        <name>a divalent metal cation</name>
        <dbReference type="ChEBI" id="CHEBI:60240"/>
        <label>3</label>
        <note>in cluster B</note>
    </ligand>
</feature>
<feature type="binding site" evidence="1">
    <location>
        <position position="27"/>
    </location>
    <ligand>
        <name>a divalent metal cation</name>
        <dbReference type="ChEBI" id="CHEBI:60240"/>
        <label>3</label>
        <note>in cluster B</note>
    </ligand>
</feature>
<feature type="binding site" evidence="1">
    <location>
        <position position="30"/>
    </location>
    <ligand>
        <name>a divalent metal cation</name>
        <dbReference type="ChEBI" id="CHEBI:60240"/>
        <label>4</label>
        <note>in cluster A</note>
    </ligand>
</feature>
<feature type="binding site" evidence="1">
    <location>
        <position position="33"/>
    </location>
    <ligand>
        <name>a divalent metal cation</name>
        <dbReference type="ChEBI" id="CHEBI:60240"/>
        <label>4</label>
        <note>in cluster A</note>
    </ligand>
</feature>
<feature type="binding site" evidence="1">
    <location>
        <position position="33"/>
    </location>
    <ligand>
        <name>a divalent metal cation</name>
        <dbReference type="ChEBI" id="CHEBI:60240"/>
        <label>5</label>
        <note>in cluster A</note>
    </ligand>
</feature>
<feature type="binding site" evidence="1">
    <location>
        <position position="37"/>
    </location>
    <ligand>
        <name>a divalent metal cation</name>
        <dbReference type="ChEBI" id="CHEBI:60240"/>
        <label>5</label>
        <note>in cluster A</note>
    </ligand>
</feature>
<feature type="binding site" evidence="1">
    <location>
        <position position="39"/>
    </location>
    <ligand>
        <name>a divalent metal cation</name>
        <dbReference type="ChEBI" id="CHEBI:60240"/>
        <label>6</label>
        <note>in cluster A</note>
    </ligand>
</feature>
<feature type="binding site" evidence="1">
    <location>
        <position position="45"/>
    </location>
    <ligand>
        <name>a divalent metal cation</name>
        <dbReference type="ChEBI" id="CHEBI:60240"/>
        <label>6</label>
        <note>in cluster A</note>
    </ligand>
</feature>
<feature type="binding site" evidence="1">
    <location>
        <position position="49"/>
    </location>
    <ligand>
        <name>a divalent metal cation</name>
        <dbReference type="ChEBI" id="CHEBI:60240"/>
        <label>4</label>
        <note>in cluster A</note>
    </ligand>
</feature>
<feature type="binding site" evidence="1">
    <location>
        <position position="49"/>
    </location>
    <ligand>
        <name>a divalent metal cation</name>
        <dbReference type="ChEBI" id="CHEBI:60240"/>
        <label>6</label>
        <note>in cluster A</note>
    </ligand>
</feature>
<feature type="binding site" evidence="1">
    <location>
        <position position="53"/>
    </location>
    <ligand>
        <name>a divalent metal cation</name>
        <dbReference type="ChEBI" id="CHEBI:60240"/>
        <label>4</label>
        <note>in cluster A</note>
    </ligand>
</feature>
<feature type="binding site" evidence="1">
    <location>
        <position position="55"/>
    </location>
    <ligand>
        <name>a divalent metal cation</name>
        <dbReference type="ChEBI" id="CHEBI:60240"/>
        <label>5</label>
        <note>in cluster A</note>
    </ligand>
</feature>
<feature type="binding site" evidence="1">
    <location>
        <position position="56"/>
    </location>
    <ligand>
        <name>a divalent metal cation</name>
        <dbReference type="ChEBI" id="CHEBI:60240"/>
        <label>5</label>
        <note>in cluster A</note>
    </ligand>
</feature>
<feature type="binding site" evidence="1">
    <location>
        <position position="56"/>
    </location>
    <ligand>
        <name>a divalent metal cation</name>
        <dbReference type="ChEBI" id="CHEBI:60240"/>
        <label>6</label>
        <note>in cluster A</note>
    </ligand>
</feature>
<reference key="1">
    <citation type="journal article" date="1982" name="J. Biol. Chem.">
        <title>Crab metallothionein. Primary structures of metallothioneins 1 and 2.</title>
        <authorList>
            <person name="Lerch K."/>
            <person name="Ammer D."/>
            <person name="Olafson R.W."/>
        </authorList>
    </citation>
    <scope>PROTEIN SEQUENCE</scope>
</reference>
<evidence type="ECO:0000250" key="1">
    <source>
        <dbReference type="UniProtKB" id="P29499"/>
    </source>
</evidence>
<evidence type="ECO:0000305" key="2"/>
<comment type="function">
    <text>Metallothioneins have a high content of cysteine residues that bind various heavy metals. Class I MTS in marine crustacea are involved in the sequestration of elevated levels of heavy-metal ions.</text>
</comment>
<comment type="similarity">
    <text evidence="2">Belongs to the metallothionein superfamily. Type 3 family.</text>
</comment>